<proteinExistence type="inferred from homology"/>
<protein>
    <recommendedName>
        <fullName>HTH-type transcriptional regulator CysB</fullName>
    </recommendedName>
    <alternativeName>
        <fullName>Cys regulon transcriptional activator</fullName>
    </alternativeName>
</protein>
<organism>
    <name type="scientific">Escherichia coli O157:H7</name>
    <dbReference type="NCBI Taxonomy" id="83334"/>
    <lineage>
        <taxon>Bacteria</taxon>
        <taxon>Pseudomonadati</taxon>
        <taxon>Pseudomonadota</taxon>
        <taxon>Gammaproteobacteria</taxon>
        <taxon>Enterobacterales</taxon>
        <taxon>Enterobacteriaceae</taxon>
        <taxon>Escherichia</taxon>
    </lineage>
</organism>
<evidence type="ECO:0000250" key="1"/>
<evidence type="ECO:0000255" key="2">
    <source>
        <dbReference type="PROSITE-ProRule" id="PRU00253"/>
    </source>
</evidence>
<evidence type="ECO:0000305" key="3"/>
<comment type="function">
    <text evidence="1">This protein is a positive regulator of gene expression for the cysteine regulon. The inducer for CysB is N-acetylserine (By similarity).</text>
</comment>
<comment type="subunit">
    <text evidence="1">Homotetramer.</text>
</comment>
<comment type="subcellular location">
    <subcellularLocation>
        <location evidence="3">Cytoplasm</location>
    </subcellularLocation>
</comment>
<comment type="similarity">
    <text evidence="3">Belongs to the LysR transcriptional regulatory family.</text>
</comment>
<sequence length="324" mass="36150">MKLQQLRYIVEVVNHNLNVSSTAEGLYTSQPGISKQVRMLEDELGIQIFSRSGKHLTQVTPAGQEIIRIAREVLSKVDAIKSVAGEHTWPDKGSLYIATTHTQARYALPNVIKGFIERYPRVSLHMHQGSPTQIADAVSKGNADFAIATEALHLYEDLVMLPCYHWNRAIVVTPDHPLAGKKAITIEELAQYPLVTYTFGFTGRSELDTAFNRAGLTPRIVFTATDADVIKTYVRLGLGVGVIASMAVDPVADPDLVRVDAHDIFSHSTTKIGFRRSTFLRSYMYDFIQRFAPHLTRDVVDAAVALRSNEEIEVMFKDIKLPEK</sequence>
<keyword id="KW-0010">Activator</keyword>
<keyword id="KW-0028">Amino-acid biosynthesis</keyword>
<keyword id="KW-0198">Cysteine biosynthesis</keyword>
<keyword id="KW-0963">Cytoplasm</keyword>
<keyword id="KW-0238">DNA-binding</keyword>
<keyword id="KW-1185">Reference proteome</keyword>
<keyword id="KW-0804">Transcription</keyword>
<keyword id="KW-0805">Transcription regulation</keyword>
<gene>
    <name type="primary">cysB</name>
    <name type="ordered locus">Z2535</name>
    <name type="ordered locus">ECs1847</name>
</gene>
<reference key="1">
    <citation type="journal article" date="2001" name="Nature">
        <title>Genome sequence of enterohaemorrhagic Escherichia coli O157:H7.</title>
        <authorList>
            <person name="Perna N.T."/>
            <person name="Plunkett G. III"/>
            <person name="Burland V."/>
            <person name="Mau B."/>
            <person name="Glasner J.D."/>
            <person name="Rose D.J."/>
            <person name="Mayhew G.F."/>
            <person name="Evans P.S."/>
            <person name="Gregor J."/>
            <person name="Kirkpatrick H.A."/>
            <person name="Posfai G."/>
            <person name="Hackett J."/>
            <person name="Klink S."/>
            <person name="Boutin A."/>
            <person name="Shao Y."/>
            <person name="Miller L."/>
            <person name="Grotbeck E.J."/>
            <person name="Davis N.W."/>
            <person name="Lim A."/>
            <person name="Dimalanta E.T."/>
            <person name="Potamousis K."/>
            <person name="Apodaca J."/>
            <person name="Anantharaman T.S."/>
            <person name="Lin J."/>
            <person name="Yen G."/>
            <person name="Schwartz D.C."/>
            <person name="Welch R.A."/>
            <person name="Blattner F.R."/>
        </authorList>
    </citation>
    <scope>NUCLEOTIDE SEQUENCE [LARGE SCALE GENOMIC DNA]</scope>
    <source>
        <strain>O157:H7 / EDL933 / ATCC 700927 / EHEC</strain>
    </source>
</reference>
<reference key="2">
    <citation type="journal article" date="2001" name="DNA Res.">
        <title>Complete genome sequence of enterohemorrhagic Escherichia coli O157:H7 and genomic comparison with a laboratory strain K-12.</title>
        <authorList>
            <person name="Hayashi T."/>
            <person name="Makino K."/>
            <person name="Ohnishi M."/>
            <person name="Kurokawa K."/>
            <person name="Ishii K."/>
            <person name="Yokoyama K."/>
            <person name="Han C.-G."/>
            <person name="Ohtsubo E."/>
            <person name="Nakayama K."/>
            <person name="Murata T."/>
            <person name="Tanaka M."/>
            <person name="Tobe T."/>
            <person name="Iida T."/>
            <person name="Takami H."/>
            <person name="Honda T."/>
            <person name="Sasakawa C."/>
            <person name="Ogasawara N."/>
            <person name="Yasunaga T."/>
            <person name="Kuhara S."/>
            <person name="Shiba T."/>
            <person name="Hattori M."/>
            <person name="Shinagawa H."/>
        </authorList>
    </citation>
    <scope>NUCLEOTIDE SEQUENCE [LARGE SCALE GENOMIC DNA]</scope>
    <source>
        <strain>O157:H7 / Sakai / RIMD 0509952 / EHEC</strain>
    </source>
</reference>
<name>CYSB_ECO57</name>
<accession>P0A9F5</accession>
<accession>P06613</accession>
<accession>P76834</accession>
<dbReference type="EMBL" id="AE005174">
    <property type="protein sequence ID" value="AAG56540.1"/>
    <property type="molecule type" value="Genomic_DNA"/>
</dbReference>
<dbReference type="EMBL" id="BA000007">
    <property type="protein sequence ID" value="BAB35270.1"/>
    <property type="molecule type" value="Genomic_DNA"/>
</dbReference>
<dbReference type="PIR" id="G90859">
    <property type="entry name" value="G90859"/>
</dbReference>
<dbReference type="PIR" id="H85759">
    <property type="entry name" value="H85759"/>
</dbReference>
<dbReference type="RefSeq" id="NP_309874.1">
    <property type="nucleotide sequence ID" value="NC_002695.1"/>
</dbReference>
<dbReference type="RefSeq" id="WP_000776253.1">
    <property type="nucleotide sequence ID" value="NZ_VOAI01000015.1"/>
</dbReference>
<dbReference type="SMR" id="P0A9F5"/>
<dbReference type="STRING" id="155864.Z2535"/>
<dbReference type="GeneID" id="912818"/>
<dbReference type="GeneID" id="93775394"/>
<dbReference type="KEGG" id="ece:Z2535"/>
<dbReference type="KEGG" id="ecs:ECs_1847"/>
<dbReference type="PATRIC" id="fig|386585.9.peg.1945"/>
<dbReference type="eggNOG" id="COG0583">
    <property type="taxonomic scope" value="Bacteria"/>
</dbReference>
<dbReference type="HOGENOM" id="CLU_039613_6_2_6"/>
<dbReference type="OMA" id="PVLQKFC"/>
<dbReference type="Proteomes" id="UP000000558">
    <property type="component" value="Chromosome"/>
</dbReference>
<dbReference type="Proteomes" id="UP000002519">
    <property type="component" value="Chromosome"/>
</dbReference>
<dbReference type="GO" id="GO:0005737">
    <property type="term" value="C:cytoplasm"/>
    <property type="evidence" value="ECO:0007669"/>
    <property type="project" value="UniProtKB-SubCell"/>
</dbReference>
<dbReference type="GO" id="GO:0003700">
    <property type="term" value="F:DNA-binding transcription factor activity"/>
    <property type="evidence" value="ECO:0007669"/>
    <property type="project" value="InterPro"/>
</dbReference>
<dbReference type="GO" id="GO:0000976">
    <property type="term" value="F:transcription cis-regulatory region binding"/>
    <property type="evidence" value="ECO:0007669"/>
    <property type="project" value="TreeGrafter"/>
</dbReference>
<dbReference type="GO" id="GO:0019344">
    <property type="term" value="P:cysteine biosynthetic process"/>
    <property type="evidence" value="ECO:0007669"/>
    <property type="project" value="UniProtKB-KW"/>
</dbReference>
<dbReference type="CDD" id="cd08443">
    <property type="entry name" value="PBP2_CysB"/>
    <property type="match status" value="1"/>
</dbReference>
<dbReference type="FunFam" id="1.10.10.10:FF:000021">
    <property type="entry name" value="HTH-type transcriptional regulator CysB"/>
    <property type="match status" value="1"/>
</dbReference>
<dbReference type="FunFam" id="3.40.190.10:FF:000037">
    <property type="entry name" value="HTH-type transcriptional regulator CysB"/>
    <property type="match status" value="1"/>
</dbReference>
<dbReference type="Gene3D" id="3.40.190.10">
    <property type="entry name" value="Periplasmic binding protein-like II"/>
    <property type="match status" value="2"/>
</dbReference>
<dbReference type="Gene3D" id="1.10.10.10">
    <property type="entry name" value="Winged helix-like DNA-binding domain superfamily/Winged helix DNA-binding domain"/>
    <property type="match status" value="1"/>
</dbReference>
<dbReference type="InterPro" id="IPR005119">
    <property type="entry name" value="LysR_subst-bd"/>
</dbReference>
<dbReference type="InterPro" id="IPR000847">
    <property type="entry name" value="Tscrpt_reg_HTH_LysR"/>
</dbReference>
<dbReference type="InterPro" id="IPR036388">
    <property type="entry name" value="WH-like_DNA-bd_sf"/>
</dbReference>
<dbReference type="InterPro" id="IPR036390">
    <property type="entry name" value="WH_DNA-bd_sf"/>
</dbReference>
<dbReference type="NCBIfam" id="NF009326">
    <property type="entry name" value="PRK12681.1"/>
    <property type="match status" value="1"/>
</dbReference>
<dbReference type="NCBIfam" id="NF009327">
    <property type="entry name" value="PRK12684.1"/>
    <property type="match status" value="1"/>
</dbReference>
<dbReference type="PANTHER" id="PTHR30126">
    <property type="entry name" value="HTH-TYPE TRANSCRIPTIONAL REGULATOR"/>
    <property type="match status" value="1"/>
</dbReference>
<dbReference type="PANTHER" id="PTHR30126:SF6">
    <property type="entry name" value="HTH-TYPE TRANSCRIPTIONAL REGULATOR CYSB-RELATED"/>
    <property type="match status" value="1"/>
</dbReference>
<dbReference type="Pfam" id="PF00126">
    <property type="entry name" value="HTH_1"/>
    <property type="match status" value="1"/>
</dbReference>
<dbReference type="Pfam" id="PF03466">
    <property type="entry name" value="LysR_substrate"/>
    <property type="match status" value="1"/>
</dbReference>
<dbReference type="PRINTS" id="PR00039">
    <property type="entry name" value="HTHLYSR"/>
</dbReference>
<dbReference type="SUPFAM" id="SSF53850">
    <property type="entry name" value="Periplasmic binding protein-like II"/>
    <property type="match status" value="1"/>
</dbReference>
<dbReference type="SUPFAM" id="SSF46785">
    <property type="entry name" value="Winged helix' DNA-binding domain"/>
    <property type="match status" value="1"/>
</dbReference>
<dbReference type="PROSITE" id="PS50931">
    <property type="entry name" value="HTH_LYSR"/>
    <property type="match status" value="1"/>
</dbReference>
<feature type="chain" id="PRO_0000105614" description="HTH-type transcriptional regulator CysB">
    <location>
        <begin position="1"/>
        <end position="324"/>
    </location>
</feature>
<feature type="domain" description="HTH lysR-type" evidence="2">
    <location>
        <begin position="1"/>
        <end position="59"/>
    </location>
</feature>
<feature type="DNA-binding region" description="H-T-H motif" evidence="2">
    <location>
        <begin position="19"/>
        <end position="38"/>
    </location>
</feature>